<gene>
    <name type="primary">dbp10</name>
    <name type="ORF">AfA12H2.09c</name>
    <name type="ORF">AFUA_6G11120</name>
</gene>
<sequence length="869" mass="96324">MPHRAASPAVSENEFDITGALFQNDSDSDNEQPSAKSKRQPPKKAFIAEQQTSANRKASNLKGRTVKKGGGFQAMGLSANLLKAIARKGFSVPTPIQRKTIPVIMDDQDVVGMARTGSGKTAAFVIPMIEKLKSHSTKVGARGLVLSPSRELALQTLKVVKELGRGTDLKSVLLVGGDSLEEQFAMIAGNPDIIIATPGRFLHLKVEMNLDLSSIRYVVFDEADRLFEMGFAAQLTEILHGLPANRQTLLFSATLPKSLVEFARAGLQEPTLVRLDTESKISPDLQNAFFSVKSSEKEGALLYILHEVIKMPTGPTEVSQQRKEEDASAKNLKNKKRKRAEMEKAVNTRESPTKHSTIVFAATKHHVDYLYSLLCEAGFAVSYVYGSLDQTARKIQVQNFRTGMTNILVVTDVAARGIDIPILANVINYDFPSQPKIFVHRVGRTARAGRKGWSYSLVRDADAPYLLDLQLFLGRRLVVGREFGDQVNFAEDVVTGSLPRDGLSQSCEWVTKVLDDNADLAAQRTVAAKGEKLYMRTRNAASLESAKRSKQVVSSDNWTSVHPLFQDETSNLEAEREKMLARIGGYRPPETIFEVNNRRMGKHENVDALDTIKRVRSTLESKKKPFSDEDDDVPTGVADNMSMASDSELEVTFSSYSKSKDNKAKKASAASFQNPEYFMSYTPNNTSLAEDRAYGVHSGTNSNFAQASRSATMDLAGDDGGRGFGEARTLMRWDKRHKKYVARQNDEDGSKGTRLVRGESGAKIAASFRSGRFDAWKRENRLGRLPRVAISGKRFRHRKEQAPKKADPLRGDYEKMKKKAELAKERAMSKAGGAAPRGKSELKSTDDIRIARKLKQKRREKNARPSRKK</sequence>
<comment type="function">
    <text evidence="1">ATP-binding RNA helicase involved in the biogenesis of 60S ribosomal subunits and is required for the normal formation of 25S and 5.8S rRNAs.</text>
</comment>
<comment type="catalytic activity">
    <reaction>
        <text>ATP + H2O = ADP + phosphate + H(+)</text>
        <dbReference type="Rhea" id="RHEA:13065"/>
        <dbReference type="ChEBI" id="CHEBI:15377"/>
        <dbReference type="ChEBI" id="CHEBI:15378"/>
        <dbReference type="ChEBI" id="CHEBI:30616"/>
        <dbReference type="ChEBI" id="CHEBI:43474"/>
        <dbReference type="ChEBI" id="CHEBI:456216"/>
        <dbReference type="EC" id="3.6.4.13"/>
    </reaction>
</comment>
<comment type="subcellular location">
    <subcellularLocation>
        <location evidence="1">Nucleus</location>
        <location evidence="1">Nucleolus</location>
    </subcellularLocation>
</comment>
<comment type="domain">
    <text>The Q motif is unique to and characteristic of the DEAD box family of RNA helicases and controls ATP binding and hydrolysis.</text>
</comment>
<comment type="similarity">
    <text evidence="5">Belongs to the DEAD box helicase family. DDX54/DBP10 subfamily.</text>
</comment>
<proteinExistence type="inferred from homology"/>
<feature type="chain" id="PRO_0000232309" description="ATP-dependent RNA helicase dbp10">
    <location>
        <begin position="1"/>
        <end position="869"/>
    </location>
</feature>
<feature type="domain" description="Helicase ATP-binding" evidence="2">
    <location>
        <begin position="101"/>
        <end position="273"/>
    </location>
</feature>
<feature type="domain" description="Helicase C-terminal" evidence="3">
    <location>
        <begin position="341"/>
        <end position="495"/>
    </location>
</feature>
<feature type="region of interest" description="Disordered" evidence="4">
    <location>
        <begin position="1"/>
        <end position="43"/>
    </location>
</feature>
<feature type="region of interest" description="Disordered" evidence="4">
    <location>
        <begin position="315"/>
        <end position="348"/>
    </location>
</feature>
<feature type="region of interest" description="Disordered" evidence="4">
    <location>
        <begin position="792"/>
        <end position="869"/>
    </location>
</feature>
<feature type="short sequence motif" description="Q motif">
    <location>
        <begin position="70"/>
        <end position="98"/>
    </location>
</feature>
<feature type="short sequence motif" description="DEAD box">
    <location>
        <begin position="221"/>
        <end position="224"/>
    </location>
</feature>
<feature type="compositionally biased region" description="Polar residues" evidence="4">
    <location>
        <begin position="21"/>
        <end position="35"/>
    </location>
</feature>
<feature type="compositionally biased region" description="Basic and acidic residues" evidence="4">
    <location>
        <begin position="800"/>
        <end position="828"/>
    </location>
</feature>
<feature type="compositionally biased region" description="Basic and acidic residues" evidence="4">
    <location>
        <begin position="838"/>
        <end position="850"/>
    </location>
</feature>
<feature type="compositionally biased region" description="Basic residues" evidence="4">
    <location>
        <begin position="851"/>
        <end position="869"/>
    </location>
</feature>
<feature type="binding site" evidence="2">
    <location>
        <begin position="114"/>
        <end position="121"/>
    </location>
    <ligand>
        <name>ATP</name>
        <dbReference type="ChEBI" id="CHEBI:30616"/>
    </ligand>
</feature>
<organism>
    <name type="scientific">Aspergillus fumigatus (strain ATCC MYA-4609 / CBS 101355 / FGSC A1100 / Af293)</name>
    <name type="common">Neosartorya fumigata</name>
    <dbReference type="NCBI Taxonomy" id="330879"/>
    <lineage>
        <taxon>Eukaryota</taxon>
        <taxon>Fungi</taxon>
        <taxon>Dikarya</taxon>
        <taxon>Ascomycota</taxon>
        <taxon>Pezizomycotina</taxon>
        <taxon>Eurotiomycetes</taxon>
        <taxon>Eurotiomycetidae</taxon>
        <taxon>Eurotiales</taxon>
        <taxon>Aspergillaceae</taxon>
        <taxon>Aspergillus</taxon>
        <taxon>Aspergillus subgen. Fumigati</taxon>
    </lineage>
</organism>
<protein>
    <recommendedName>
        <fullName>ATP-dependent RNA helicase dbp10</fullName>
        <ecNumber>3.6.4.13</ecNumber>
    </recommendedName>
</protein>
<accession>Q8NJM2</accession>
<accession>Q4WM56</accession>
<dbReference type="EC" id="3.6.4.13"/>
<dbReference type="EMBL" id="AL807577">
    <property type="protein sequence ID" value="CAD37147.1"/>
    <property type="molecule type" value="Genomic_DNA"/>
</dbReference>
<dbReference type="EMBL" id="AAHF01000006">
    <property type="protein sequence ID" value="EAL88958.1"/>
    <property type="molecule type" value="Genomic_DNA"/>
</dbReference>
<dbReference type="RefSeq" id="XP_750996.1">
    <property type="nucleotide sequence ID" value="XM_745903.1"/>
</dbReference>
<dbReference type="SMR" id="Q8NJM2"/>
<dbReference type="FunCoup" id="Q8NJM2">
    <property type="interactions" value="1055"/>
</dbReference>
<dbReference type="STRING" id="330879.Q8NJM2"/>
<dbReference type="EnsemblFungi" id="EAL88958">
    <property type="protein sequence ID" value="EAL88958"/>
    <property type="gene ID" value="AFUA_6G11120"/>
</dbReference>
<dbReference type="GeneID" id="3508301"/>
<dbReference type="KEGG" id="afm:AFUA_6G11120"/>
<dbReference type="eggNOG" id="KOG0337">
    <property type="taxonomic scope" value="Eukaryota"/>
</dbReference>
<dbReference type="HOGENOM" id="CLU_003041_5_1_1"/>
<dbReference type="InParanoid" id="Q8NJM2"/>
<dbReference type="OMA" id="EDQFGMM"/>
<dbReference type="OrthoDB" id="10261375at2759"/>
<dbReference type="Proteomes" id="UP000002530">
    <property type="component" value="Chromosome 6"/>
</dbReference>
<dbReference type="GO" id="GO:0005730">
    <property type="term" value="C:nucleolus"/>
    <property type="evidence" value="ECO:0000318"/>
    <property type="project" value="GO_Central"/>
</dbReference>
<dbReference type="GO" id="GO:0005524">
    <property type="term" value="F:ATP binding"/>
    <property type="evidence" value="ECO:0007669"/>
    <property type="project" value="UniProtKB-KW"/>
</dbReference>
<dbReference type="GO" id="GO:0016887">
    <property type="term" value="F:ATP hydrolysis activity"/>
    <property type="evidence" value="ECO:0007669"/>
    <property type="project" value="RHEA"/>
</dbReference>
<dbReference type="GO" id="GO:0003723">
    <property type="term" value="F:RNA binding"/>
    <property type="evidence" value="ECO:0007669"/>
    <property type="project" value="UniProtKB-KW"/>
</dbReference>
<dbReference type="GO" id="GO:0003724">
    <property type="term" value="F:RNA helicase activity"/>
    <property type="evidence" value="ECO:0007669"/>
    <property type="project" value="UniProtKB-EC"/>
</dbReference>
<dbReference type="GO" id="GO:0006364">
    <property type="term" value="P:rRNA processing"/>
    <property type="evidence" value="ECO:0000318"/>
    <property type="project" value="GO_Central"/>
</dbReference>
<dbReference type="CDD" id="cd17959">
    <property type="entry name" value="DEADc_DDX54"/>
    <property type="match status" value="1"/>
</dbReference>
<dbReference type="CDD" id="cd18787">
    <property type="entry name" value="SF2_C_DEAD"/>
    <property type="match status" value="1"/>
</dbReference>
<dbReference type="FunFam" id="3.40.50.300:FF:000865">
    <property type="entry name" value="ATP-dependent RNA helicase DDX54"/>
    <property type="match status" value="1"/>
</dbReference>
<dbReference type="Gene3D" id="3.40.50.300">
    <property type="entry name" value="P-loop containing nucleotide triphosphate hydrolases"/>
    <property type="match status" value="2"/>
</dbReference>
<dbReference type="InterPro" id="IPR012541">
    <property type="entry name" value="DBP10_C"/>
</dbReference>
<dbReference type="InterPro" id="IPR033517">
    <property type="entry name" value="DDX54/DBP10_DEAD-box_helicase"/>
</dbReference>
<dbReference type="InterPro" id="IPR011545">
    <property type="entry name" value="DEAD/DEAH_box_helicase_dom"/>
</dbReference>
<dbReference type="InterPro" id="IPR050079">
    <property type="entry name" value="DEAD_box_RNA_helicase"/>
</dbReference>
<dbReference type="InterPro" id="IPR014001">
    <property type="entry name" value="Helicase_ATP-bd"/>
</dbReference>
<dbReference type="InterPro" id="IPR001650">
    <property type="entry name" value="Helicase_C-like"/>
</dbReference>
<dbReference type="InterPro" id="IPR027417">
    <property type="entry name" value="P-loop_NTPase"/>
</dbReference>
<dbReference type="InterPro" id="IPR000629">
    <property type="entry name" value="RNA-helicase_DEAD-box_CS"/>
</dbReference>
<dbReference type="InterPro" id="IPR014014">
    <property type="entry name" value="RNA_helicase_DEAD_Q_motif"/>
</dbReference>
<dbReference type="PANTHER" id="PTHR47959">
    <property type="entry name" value="ATP-DEPENDENT RNA HELICASE RHLE-RELATED"/>
    <property type="match status" value="1"/>
</dbReference>
<dbReference type="PANTHER" id="PTHR47959:SF8">
    <property type="entry name" value="RNA HELICASE"/>
    <property type="match status" value="1"/>
</dbReference>
<dbReference type="Pfam" id="PF08147">
    <property type="entry name" value="DBP10CT"/>
    <property type="match status" value="1"/>
</dbReference>
<dbReference type="Pfam" id="PF00270">
    <property type="entry name" value="DEAD"/>
    <property type="match status" value="1"/>
</dbReference>
<dbReference type="Pfam" id="PF00271">
    <property type="entry name" value="Helicase_C"/>
    <property type="match status" value="1"/>
</dbReference>
<dbReference type="SMART" id="SM01123">
    <property type="entry name" value="DBP10CT"/>
    <property type="match status" value="1"/>
</dbReference>
<dbReference type="SMART" id="SM00487">
    <property type="entry name" value="DEXDc"/>
    <property type="match status" value="1"/>
</dbReference>
<dbReference type="SMART" id="SM00490">
    <property type="entry name" value="HELICc"/>
    <property type="match status" value="1"/>
</dbReference>
<dbReference type="SUPFAM" id="SSF52540">
    <property type="entry name" value="P-loop containing nucleoside triphosphate hydrolases"/>
    <property type="match status" value="2"/>
</dbReference>
<dbReference type="PROSITE" id="PS00039">
    <property type="entry name" value="DEAD_ATP_HELICASE"/>
    <property type="match status" value="1"/>
</dbReference>
<dbReference type="PROSITE" id="PS51192">
    <property type="entry name" value="HELICASE_ATP_BIND_1"/>
    <property type="match status" value="1"/>
</dbReference>
<dbReference type="PROSITE" id="PS51194">
    <property type="entry name" value="HELICASE_CTER"/>
    <property type="match status" value="1"/>
</dbReference>
<dbReference type="PROSITE" id="PS51195">
    <property type="entry name" value="Q_MOTIF"/>
    <property type="match status" value="1"/>
</dbReference>
<evidence type="ECO:0000250" key="1"/>
<evidence type="ECO:0000255" key="2">
    <source>
        <dbReference type="PROSITE-ProRule" id="PRU00541"/>
    </source>
</evidence>
<evidence type="ECO:0000255" key="3">
    <source>
        <dbReference type="PROSITE-ProRule" id="PRU00542"/>
    </source>
</evidence>
<evidence type="ECO:0000256" key="4">
    <source>
        <dbReference type="SAM" id="MobiDB-lite"/>
    </source>
</evidence>
<evidence type="ECO:0000305" key="5"/>
<keyword id="KW-0067">ATP-binding</keyword>
<keyword id="KW-0347">Helicase</keyword>
<keyword id="KW-0378">Hydrolase</keyword>
<keyword id="KW-0547">Nucleotide-binding</keyword>
<keyword id="KW-0539">Nucleus</keyword>
<keyword id="KW-1185">Reference proteome</keyword>
<keyword id="KW-0690">Ribosome biogenesis</keyword>
<keyword id="KW-0694">RNA-binding</keyword>
<keyword id="KW-0698">rRNA processing</keyword>
<reference key="1">
    <citation type="submission" date="2002-06" db="EMBL/GenBank/DDBJ databases">
        <authorList>
            <person name="Harris D.E."/>
            <person name="O'Neil S."/>
            <person name="Knowles D.G."/>
            <person name="Hall N."/>
            <person name="Quail M.A."/>
            <person name="Woodward J.R."/>
            <person name="Denning D.W."/>
            <person name="Anderson M.J."/>
            <person name="Barrell B.G."/>
        </authorList>
    </citation>
    <scope>NUCLEOTIDE SEQUENCE [GENOMIC DNA]</scope>
    <source>
        <strain>ATCC MYA-4609 / CBS 101355 / FGSC A1100 / Af293</strain>
    </source>
</reference>
<reference key="2">
    <citation type="journal article" date="2005" name="Nature">
        <title>Genomic sequence of the pathogenic and allergenic filamentous fungus Aspergillus fumigatus.</title>
        <authorList>
            <person name="Nierman W.C."/>
            <person name="Pain A."/>
            <person name="Anderson M.J."/>
            <person name="Wortman J.R."/>
            <person name="Kim H.S."/>
            <person name="Arroyo J."/>
            <person name="Berriman M."/>
            <person name="Abe K."/>
            <person name="Archer D.B."/>
            <person name="Bermejo C."/>
            <person name="Bennett J.W."/>
            <person name="Bowyer P."/>
            <person name="Chen D."/>
            <person name="Collins M."/>
            <person name="Coulsen R."/>
            <person name="Davies R."/>
            <person name="Dyer P.S."/>
            <person name="Farman M.L."/>
            <person name="Fedorova N."/>
            <person name="Fedorova N.D."/>
            <person name="Feldblyum T.V."/>
            <person name="Fischer R."/>
            <person name="Fosker N."/>
            <person name="Fraser A."/>
            <person name="Garcia J.L."/>
            <person name="Garcia M.J."/>
            <person name="Goble A."/>
            <person name="Goldman G.H."/>
            <person name="Gomi K."/>
            <person name="Griffith-Jones S."/>
            <person name="Gwilliam R."/>
            <person name="Haas B.J."/>
            <person name="Haas H."/>
            <person name="Harris D.E."/>
            <person name="Horiuchi H."/>
            <person name="Huang J."/>
            <person name="Humphray S."/>
            <person name="Jimenez J."/>
            <person name="Keller N."/>
            <person name="Khouri H."/>
            <person name="Kitamoto K."/>
            <person name="Kobayashi T."/>
            <person name="Konzack S."/>
            <person name="Kulkarni R."/>
            <person name="Kumagai T."/>
            <person name="Lafton A."/>
            <person name="Latge J.-P."/>
            <person name="Li W."/>
            <person name="Lord A."/>
            <person name="Lu C."/>
            <person name="Majoros W.H."/>
            <person name="May G.S."/>
            <person name="Miller B.L."/>
            <person name="Mohamoud Y."/>
            <person name="Molina M."/>
            <person name="Monod M."/>
            <person name="Mouyna I."/>
            <person name="Mulligan S."/>
            <person name="Murphy L.D."/>
            <person name="O'Neil S."/>
            <person name="Paulsen I."/>
            <person name="Penalva M.A."/>
            <person name="Pertea M."/>
            <person name="Price C."/>
            <person name="Pritchard B.L."/>
            <person name="Quail M.A."/>
            <person name="Rabbinowitsch E."/>
            <person name="Rawlins N."/>
            <person name="Rajandream M.A."/>
            <person name="Reichard U."/>
            <person name="Renauld H."/>
            <person name="Robson G.D."/>
            <person name="Rodriguez de Cordoba S."/>
            <person name="Rodriguez-Pena J.M."/>
            <person name="Ronning C.M."/>
            <person name="Rutter S."/>
            <person name="Salzberg S.L."/>
            <person name="Sanchez M."/>
            <person name="Sanchez-Ferrero J.C."/>
            <person name="Saunders D."/>
            <person name="Seeger K."/>
            <person name="Squares R."/>
            <person name="Squares S."/>
            <person name="Takeuchi M."/>
            <person name="Tekaia F."/>
            <person name="Turner G."/>
            <person name="Vazquez de Aldana C.R."/>
            <person name="Weidman J."/>
            <person name="White O."/>
            <person name="Woodward J.R."/>
            <person name="Yu J.-H."/>
            <person name="Fraser C.M."/>
            <person name="Galagan J.E."/>
            <person name="Asai K."/>
            <person name="Machida M."/>
            <person name="Hall N."/>
            <person name="Barrell B.G."/>
            <person name="Denning D.W."/>
        </authorList>
    </citation>
    <scope>NUCLEOTIDE SEQUENCE [LARGE SCALE GENOMIC DNA]</scope>
    <source>
        <strain>ATCC MYA-4609 / CBS 101355 / FGSC A1100 / Af293</strain>
    </source>
</reference>
<name>DBP10_ASPFU</name>